<feature type="chain" id="PRO_0000363172" description="Arginine/agmatine antiporter">
    <location>
        <begin position="1"/>
        <end position="485"/>
    </location>
</feature>
<feature type="transmembrane region" description="Helical" evidence="1">
    <location>
        <begin position="12"/>
        <end position="34"/>
    </location>
</feature>
<feature type="transmembrane region" description="Helical" evidence="1">
    <location>
        <begin position="38"/>
        <end position="60"/>
    </location>
</feature>
<feature type="transmembrane region" description="Helical" evidence="1">
    <location>
        <begin position="89"/>
        <end position="111"/>
    </location>
</feature>
<feature type="transmembrane region" description="Helical" evidence="1">
    <location>
        <begin position="126"/>
        <end position="148"/>
    </location>
</feature>
<feature type="transmembrane region" description="Helical" evidence="1">
    <location>
        <begin position="155"/>
        <end position="177"/>
    </location>
</feature>
<feature type="transmembrane region" description="Helical" evidence="1">
    <location>
        <begin position="211"/>
        <end position="230"/>
    </location>
</feature>
<feature type="transmembrane region" description="Helical" evidence="1">
    <location>
        <begin position="243"/>
        <end position="265"/>
    </location>
</feature>
<feature type="transmembrane region" description="Helical" evidence="1">
    <location>
        <begin position="291"/>
        <end position="313"/>
    </location>
</feature>
<feature type="transmembrane region" description="Helical" evidence="1">
    <location>
        <begin position="363"/>
        <end position="385"/>
    </location>
</feature>
<feature type="transmembrane region" description="Helical" evidence="1">
    <location>
        <begin position="400"/>
        <end position="422"/>
    </location>
</feature>
<feature type="transmembrane region" description="Helical" evidence="1">
    <location>
        <begin position="427"/>
        <end position="446"/>
    </location>
</feature>
<feature type="transmembrane region" description="Helical" evidence="1">
    <location>
        <begin position="461"/>
        <end position="483"/>
    </location>
</feature>
<feature type="sequence conflict" description="In Ref. 1; AAD19168." evidence="3" ref="1">
    <original>S</original>
    <variation>L</variation>
    <location>
        <position position="479"/>
    </location>
</feature>
<sequence length="485" mass="52548">MTSRTKSSKNLGTIALAGMVVSSIIGGGIFSLPQNMAATAGAGAVILSWILTGFGMFFIANTFRILSTIRPDLKEGIYMYSREGFGPYIGFTIGWGYWLCQIFGNVGYAVITMDALNYFFPPYFQGGNTLPAILGGSILIWVFNFIVLKGIRQASIINVIGTIFKIIPLIIFIILTAFFFKLAVFKTDFWGHAVTKAQPSLGSVSSQLKGTMLVTLWAFIGIEGAVVMSGRAKNPLSVGQATVLGFLGCLTIYILFSLLPFGSLFQHQLANIPNPSTAGVLDILVGKWGEVLMNVGLIIAVLSSWLSWTIIVAEIPFSAAKNGTFPEIFTIENKEKSPSVSLYITSSVMQLAMLLVYFSSNAWNTMLSITGVMVLPAYLASAAFLFKLSKSKTYPKKGSIKAPLAMITGILGVVYSLWLIYAGGLKYLFMALVLLALGIPFYIDAGKKKKNAKTFFAKKEIVGMTFIGLLALTAIFLFSTGRIKI</sequence>
<evidence type="ECO:0000255" key="1"/>
<evidence type="ECO:0000269" key="2">
    <source>
    </source>
</evidence>
<evidence type="ECO:0000305" key="3"/>
<keyword id="KW-0029">Amino-acid transport</keyword>
<keyword id="KW-0050">Antiport</keyword>
<keyword id="KW-0997">Cell inner membrane</keyword>
<keyword id="KW-1003">Cell membrane</keyword>
<keyword id="KW-0472">Membrane</keyword>
<keyword id="KW-0812">Transmembrane</keyword>
<keyword id="KW-1133">Transmembrane helix</keyword>
<keyword id="KW-0813">Transport</keyword>
<keyword id="KW-0843">Virulence</keyword>
<name>AAXC_CHLPN</name>
<gene>
    <name type="primary">aaxC</name>
    <name type="synonym">arcD</name>
    <name type="ordered locus">CPn_1031</name>
    <name type="ordered locus">CP_0821</name>
    <name type="ordered locus">CPj1031</name>
    <name type="ordered locus">CpB1071</name>
</gene>
<proteinExistence type="evidence at protein level"/>
<dbReference type="EMBL" id="AE001363">
    <property type="protein sequence ID" value="AAD19168.1"/>
    <property type="molecule type" value="Genomic_DNA"/>
</dbReference>
<dbReference type="EMBL" id="AE002161">
    <property type="protein sequence ID" value="AAF73708.1"/>
    <property type="molecule type" value="Genomic_DNA"/>
</dbReference>
<dbReference type="EMBL" id="BA000008">
    <property type="protein sequence ID" value="BAA99238.1"/>
    <property type="status" value="ALT_SEQ"/>
    <property type="molecule type" value="Genomic_DNA"/>
</dbReference>
<dbReference type="EMBL" id="AE009440">
    <property type="protein sequence ID" value="AAP99000.1"/>
    <property type="molecule type" value="Genomic_DNA"/>
</dbReference>
<dbReference type="PIR" id="A72006">
    <property type="entry name" value="A72006"/>
</dbReference>
<dbReference type="PIR" id="D86619">
    <property type="entry name" value="D86619"/>
</dbReference>
<dbReference type="RefSeq" id="NP_225225.1">
    <property type="nucleotide sequence ID" value="NC_000922.1"/>
</dbReference>
<dbReference type="RefSeq" id="WP_010883664.1">
    <property type="nucleotide sequence ID" value="NZ_LN847257.1"/>
</dbReference>
<dbReference type="RefSeq" id="WP_010892188.1">
    <property type="nucleotide sequence ID" value="NZ_LN846995.1"/>
</dbReference>
<dbReference type="SMR" id="Q9Z6M8"/>
<dbReference type="STRING" id="406984.CPK_ORF00458"/>
<dbReference type="TCDB" id="2.A.3.2.7">
    <property type="family name" value="the amino acid-polyamine-organocation (apc) family"/>
</dbReference>
<dbReference type="GeneID" id="45051089"/>
<dbReference type="KEGG" id="cpa:CP_0821"/>
<dbReference type="KEGG" id="cpj:arcD"/>
<dbReference type="KEGG" id="cpn:CPn_1031"/>
<dbReference type="KEGG" id="cpt:CpB1071"/>
<dbReference type="PATRIC" id="fig|115713.3.peg.1129"/>
<dbReference type="eggNOG" id="COG0531">
    <property type="taxonomic scope" value="Bacteria"/>
</dbReference>
<dbReference type="HOGENOM" id="CLU_007946_1_2_0"/>
<dbReference type="OrthoDB" id="178667at2"/>
<dbReference type="Proteomes" id="UP000000583">
    <property type="component" value="Chromosome"/>
</dbReference>
<dbReference type="Proteomes" id="UP000000801">
    <property type="component" value="Chromosome"/>
</dbReference>
<dbReference type="GO" id="GO:0005886">
    <property type="term" value="C:plasma membrane"/>
    <property type="evidence" value="ECO:0007669"/>
    <property type="project" value="UniProtKB-SubCell"/>
</dbReference>
<dbReference type="GO" id="GO:0015297">
    <property type="term" value="F:antiporter activity"/>
    <property type="evidence" value="ECO:0007669"/>
    <property type="project" value="UniProtKB-KW"/>
</dbReference>
<dbReference type="GO" id="GO:0006865">
    <property type="term" value="P:amino acid transport"/>
    <property type="evidence" value="ECO:0007669"/>
    <property type="project" value="UniProtKB-KW"/>
</dbReference>
<dbReference type="Gene3D" id="1.20.1740.10">
    <property type="entry name" value="Amino acid/polyamine transporter I"/>
    <property type="match status" value="1"/>
</dbReference>
<dbReference type="InterPro" id="IPR002293">
    <property type="entry name" value="AA/rel_permease1"/>
</dbReference>
<dbReference type="InterPro" id="IPR004754">
    <property type="entry name" value="Amino_acid_antiprt"/>
</dbReference>
<dbReference type="InterPro" id="IPR050367">
    <property type="entry name" value="APC_superfamily"/>
</dbReference>
<dbReference type="NCBIfam" id="TIGR00905">
    <property type="entry name" value="2A0302"/>
    <property type="match status" value="1"/>
</dbReference>
<dbReference type="PANTHER" id="PTHR42770">
    <property type="entry name" value="AMINO ACID TRANSPORTER-RELATED"/>
    <property type="match status" value="1"/>
</dbReference>
<dbReference type="PANTHER" id="PTHR42770:SF4">
    <property type="entry name" value="ARGININE_ORNITHINE ANTIPORTER-RELATED"/>
    <property type="match status" value="1"/>
</dbReference>
<dbReference type="Pfam" id="PF13520">
    <property type="entry name" value="AA_permease_2"/>
    <property type="match status" value="1"/>
</dbReference>
<dbReference type="PIRSF" id="PIRSF006060">
    <property type="entry name" value="AA_transporter"/>
    <property type="match status" value="1"/>
</dbReference>
<dbReference type="PROSITE" id="PS00211">
    <property type="entry name" value="ABC_TRANSPORTER_1"/>
    <property type="match status" value="1"/>
</dbReference>
<reference key="1">
    <citation type="journal article" date="1999" name="Nat. Genet.">
        <title>Comparative genomes of Chlamydia pneumoniae and C. trachomatis.</title>
        <authorList>
            <person name="Kalman S."/>
            <person name="Mitchell W.P."/>
            <person name="Marathe R."/>
            <person name="Lammel C.J."/>
            <person name="Fan J."/>
            <person name="Hyman R.W."/>
            <person name="Olinger L."/>
            <person name="Grimwood J."/>
            <person name="Davis R.W."/>
            <person name="Stephens R.S."/>
        </authorList>
    </citation>
    <scope>NUCLEOTIDE SEQUENCE [LARGE SCALE GENOMIC DNA]</scope>
    <source>
        <strain>CWL029</strain>
    </source>
</reference>
<reference key="2">
    <citation type="journal article" date="2000" name="Nucleic Acids Res.">
        <title>Genome sequences of Chlamydia trachomatis MoPn and Chlamydia pneumoniae AR39.</title>
        <authorList>
            <person name="Read T.D."/>
            <person name="Brunham R.C."/>
            <person name="Shen C."/>
            <person name="Gill S.R."/>
            <person name="Heidelberg J.F."/>
            <person name="White O."/>
            <person name="Hickey E.K."/>
            <person name="Peterson J.D."/>
            <person name="Utterback T.R."/>
            <person name="Berry K.J."/>
            <person name="Bass S."/>
            <person name="Linher K.D."/>
            <person name="Weidman J.F."/>
            <person name="Khouri H.M."/>
            <person name="Craven B."/>
            <person name="Bowman C."/>
            <person name="Dodson R.J."/>
            <person name="Gwinn M.L."/>
            <person name="Nelson W.C."/>
            <person name="DeBoy R.T."/>
            <person name="Kolonay J.F."/>
            <person name="McClarty G."/>
            <person name="Salzberg S.L."/>
            <person name="Eisen J.A."/>
            <person name="Fraser C.M."/>
        </authorList>
    </citation>
    <scope>NUCLEOTIDE SEQUENCE [LARGE SCALE GENOMIC DNA]</scope>
    <source>
        <strain>AR39</strain>
    </source>
</reference>
<reference key="3">
    <citation type="journal article" date="2000" name="Nucleic Acids Res.">
        <title>Comparison of whole genome sequences of Chlamydia pneumoniae J138 from Japan and CWL029 from USA.</title>
        <authorList>
            <person name="Shirai M."/>
            <person name="Hirakawa H."/>
            <person name="Kimoto M."/>
            <person name="Tabuchi M."/>
            <person name="Kishi F."/>
            <person name="Ouchi K."/>
            <person name="Shiba T."/>
            <person name="Ishii K."/>
            <person name="Hattori M."/>
            <person name="Kuhara S."/>
            <person name="Nakazawa T."/>
        </authorList>
    </citation>
    <scope>NUCLEOTIDE SEQUENCE [LARGE SCALE GENOMIC DNA]</scope>
    <source>
        <strain>J138</strain>
    </source>
</reference>
<reference key="4">
    <citation type="submission" date="2002-05" db="EMBL/GenBank/DDBJ databases">
        <title>The genome sequence of Chlamydia pneumoniae TW183 and comparison with other Chlamydia strains based on whole genome sequence analysis.</title>
        <authorList>
            <person name="Geng M.M."/>
            <person name="Schuhmacher A."/>
            <person name="Muehldorfer I."/>
            <person name="Bensch K.W."/>
            <person name="Schaefer K.P."/>
            <person name="Schneider S."/>
            <person name="Pohl T."/>
            <person name="Essig A."/>
            <person name="Marre R."/>
            <person name="Melchers K."/>
        </authorList>
    </citation>
    <scope>NUCLEOTIDE SEQUENCE [LARGE SCALE GENOMIC DNA]</scope>
    <source>
        <strain>TW-183</strain>
    </source>
</reference>
<reference key="5">
    <citation type="journal article" date="2008" name="J. Bacteriol.">
        <title>Outer and inner membrane proteins compose an arginine-agmatine exchange system in Chlamydophila pneumoniae.</title>
        <authorList>
            <person name="Smith C.B."/>
            <person name="Graham D.E."/>
        </authorList>
    </citation>
    <scope>FUNCTION IN ARGININE UPTAKE</scope>
    <scope>SUBCELLULAR LOCATION</scope>
    <source>
        <strain>Kajaani 6</strain>
    </source>
</reference>
<protein>
    <recommendedName>
        <fullName>Arginine/agmatine antiporter</fullName>
    </recommendedName>
</protein>
<comment type="function">
    <text evidence="2">Catalyzes the exchange of L-arginine for agmatine. The arginine uptake by the bacterium in the macrophage may be a virulence factor against the host innate immune response.</text>
</comment>
<comment type="subcellular location">
    <subcellularLocation>
        <location evidence="2">Cell inner membrane</location>
        <topology evidence="2">Multi-pass membrane protein</topology>
    </subcellularLocation>
</comment>
<comment type="miscellaneous">
    <text>Inhibited by L-canavanine and D-arginine. Resistant to cadaverine, L-lysine and L-ornithine.</text>
</comment>
<comment type="similarity">
    <text evidence="3">Belongs to the amino acid-polyamine-organocation (APC) superfamily. Basic amino acid/polyamine antiporter (APA) (TC 2.A.3.2) family.</text>
</comment>
<comment type="sequence caution" evidence="3">
    <conflict type="erroneous termination">
        <sequence resource="EMBL-CDS" id="BAA99238"/>
    </conflict>
    <text>Truncated C-terminus.</text>
</comment>
<accession>Q9Z6M8</accession>
<accession>Q7BWL4</accession>
<accession>Q9JS75</accession>
<accession>Q9K1X7</accession>
<organism>
    <name type="scientific">Chlamydia pneumoniae</name>
    <name type="common">Chlamydophila pneumoniae</name>
    <dbReference type="NCBI Taxonomy" id="83558"/>
    <lineage>
        <taxon>Bacteria</taxon>
        <taxon>Pseudomonadati</taxon>
        <taxon>Chlamydiota</taxon>
        <taxon>Chlamydiia</taxon>
        <taxon>Chlamydiales</taxon>
        <taxon>Chlamydiaceae</taxon>
        <taxon>Chlamydia/Chlamydophila group</taxon>
        <taxon>Chlamydia</taxon>
    </lineage>
</organism>